<keyword id="KW-0058">Aromatic hydrocarbons catabolism</keyword>
<keyword id="KW-0456">Lyase</keyword>
<comment type="function">
    <text evidence="1">Catalyzes the conversion of 2-hydroxypentadienoic acid (enolic form of 2-oxopent-4-enoate) to 4-hydroxy-2-ketopentanoic acid.</text>
</comment>
<comment type="catalytic activity">
    <reaction evidence="1">
        <text>(S)-4-hydroxy-2-oxopentanoate = (2Z)-2-hydroxypenta-2,4-dienoate + H2O</text>
        <dbReference type="Rhea" id="RHEA:22580"/>
        <dbReference type="ChEBI" id="CHEBI:15377"/>
        <dbReference type="ChEBI" id="CHEBI:67152"/>
        <dbReference type="ChEBI" id="CHEBI:73143"/>
        <dbReference type="EC" id="4.2.1.80"/>
    </reaction>
</comment>
<comment type="cofactor">
    <cofactor evidence="1">
        <name>a divalent metal cation</name>
        <dbReference type="ChEBI" id="CHEBI:60240"/>
    </cofactor>
</comment>
<comment type="pathway">
    <text evidence="1">Aromatic compound metabolism; 3-phenylpropanoate degradation.</text>
</comment>
<comment type="similarity">
    <text evidence="1">Belongs to the hydratase/decarboxylase family. MhpD subfamily.</text>
</comment>
<organism>
    <name type="scientific">Pseudomonas putida</name>
    <name type="common">Arthrobacter siderocapsulatus</name>
    <dbReference type="NCBI Taxonomy" id="303"/>
    <lineage>
        <taxon>Bacteria</taxon>
        <taxon>Pseudomonadati</taxon>
        <taxon>Pseudomonadota</taxon>
        <taxon>Gammaproteobacteria</taxon>
        <taxon>Pseudomonadales</taxon>
        <taxon>Pseudomonadaceae</taxon>
        <taxon>Pseudomonas</taxon>
    </lineage>
</organism>
<name>MHPD1_PSEPU</name>
<gene>
    <name evidence="1" type="primary">mhpD1</name>
    <name type="synonym">orcD</name>
</gene>
<accession>Q400K2</accession>
<dbReference type="EC" id="4.2.1.80" evidence="1"/>
<dbReference type="EMBL" id="AF534914">
    <property type="protein sequence ID" value="AAQ10536.1"/>
    <property type="molecule type" value="Genomic_DNA"/>
</dbReference>
<dbReference type="SMR" id="Q400K2"/>
<dbReference type="UniPathway" id="UPA00714"/>
<dbReference type="GO" id="GO:0005737">
    <property type="term" value="C:cytoplasm"/>
    <property type="evidence" value="ECO:0007669"/>
    <property type="project" value="TreeGrafter"/>
</dbReference>
<dbReference type="GO" id="GO:0008684">
    <property type="term" value="F:2-oxopent-4-enoate hydratase activity"/>
    <property type="evidence" value="ECO:0007669"/>
    <property type="project" value="UniProtKB-UniRule"/>
</dbReference>
<dbReference type="GO" id="GO:0030145">
    <property type="term" value="F:manganese ion binding"/>
    <property type="evidence" value="ECO:0007669"/>
    <property type="project" value="InterPro"/>
</dbReference>
<dbReference type="GO" id="GO:0019380">
    <property type="term" value="P:3-phenylpropionate catabolic process"/>
    <property type="evidence" value="ECO:0007669"/>
    <property type="project" value="UniProtKB-UniRule"/>
</dbReference>
<dbReference type="Gene3D" id="3.90.850.10">
    <property type="entry name" value="Fumarylacetoacetase-like, C-terminal domain"/>
    <property type="match status" value="1"/>
</dbReference>
<dbReference type="HAMAP" id="MF_01655">
    <property type="entry name" value="MhpD"/>
    <property type="match status" value="1"/>
</dbReference>
<dbReference type="InterPro" id="IPR011234">
    <property type="entry name" value="Fumarylacetoacetase-like_C"/>
</dbReference>
<dbReference type="InterPro" id="IPR036663">
    <property type="entry name" value="Fumarylacetoacetase_C_sf"/>
</dbReference>
<dbReference type="InterPro" id="IPR050772">
    <property type="entry name" value="Hydratase-Decarb/MhpD_sf"/>
</dbReference>
<dbReference type="InterPro" id="IPR023793">
    <property type="entry name" value="Keto_pentenoate-hydratase"/>
</dbReference>
<dbReference type="NCBIfam" id="NF008461">
    <property type="entry name" value="PRK11342.1"/>
    <property type="match status" value="1"/>
</dbReference>
<dbReference type="PANTHER" id="PTHR30143:SF0">
    <property type="entry name" value="2-KETO-4-PENTENOATE HYDRATASE"/>
    <property type="match status" value="1"/>
</dbReference>
<dbReference type="PANTHER" id="PTHR30143">
    <property type="entry name" value="ACID HYDRATASE"/>
    <property type="match status" value="1"/>
</dbReference>
<dbReference type="Pfam" id="PF01557">
    <property type="entry name" value="FAA_hydrolase"/>
    <property type="match status" value="1"/>
</dbReference>
<dbReference type="SUPFAM" id="SSF56529">
    <property type="entry name" value="FAH"/>
    <property type="match status" value="1"/>
</dbReference>
<feature type="chain" id="PRO_0000337797" description="2-keto-4-pentenoate hydratase 1">
    <location>
        <begin position="1"/>
        <end position="265"/>
    </location>
</feature>
<protein>
    <recommendedName>
        <fullName evidence="1">2-keto-4-pentenoate hydratase 1</fullName>
        <ecNumber evidence="1">4.2.1.80</ecNumber>
    </recommendedName>
    <alternativeName>
        <fullName evidence="1">2-hydroxypentadienoic acid hydratase 1</fullName>
    </alternativeName>
</protein>
<proteinExistence type="inferred from homology"/>
<evidence type="ECO:0000255" key="1">
    <source>
        <dbReference type="HAMAP-Rule" id="MF_01655"/>
    </source>
</evidence>
<reference key="1">
    <citation type="submission" date="2002-08" db="EMBL/GenBank/DDBJ databases">
        <title>Cloning of genes involved in meta-cleavage pathways of Pseudomonas putida orc: nucleotide sequences of genes, characterization of two dioxygenases and identification of the orcinol pathway.</title>
        <authorList>
            <person name="Straganz G.D."/>
            <person name="Glieder A."/>
            <person name="Steiner W."/>
        </authorList>
    </citation>
    <scope>NUCLEOTIDE SEQUENCE [GENOMIC DNA]</scope>
    <source>
        <strain>ORC</strain>
    </source>
</reference>
<sequence>MTISQETLERLAADLRRAEQQGEAIPPLRDAIGAENGEAAYAIQRLNVAHALAAGRRLVGRKVGLTNPKVQAQLGVDQPDFGCLFADMAYGDNETVPFDRVLQPKIEREIALVLERDLPARTPTWPNVANRHRLGACRPLEIVGTVSPTWNIRFADTVADNASSGLFVLGGPARRLDGLDLRGAAMRMTRNDELVSSGSGAECLGHPLNAAVWLARTLARLGDPLKAGDIVLTGALGPMVAVNAGDRFDAEIDGLGRVGVTFSQS</sequence>